<comment type="function">
    <text evidence="1">Catalyzes the decarboxylation of oxaloacetate coupled to Na(+) translocation.</text>
</comment>
<comment type="catalytic activity">
    <reaction evidence="1">
        <text>oxaloacetate + 2 Na(+)(in) + H(+) = pyruvate + 2 Na(+)(out) + CO2</text>
        <dbReference type="Rhea" id="RHEA:57724"/>
        <dbReference type="ChEBI" id="CHEBI:15361"/>
        <dbReference type="ChEBI" id="CHEBI:15378"/>
        <dbReference type="ChEBI" id="CHEBI:16452"/>
        <dbReference type="ChEBI" id="CHEBI:16526"/>
        <dbReference type="ChEBI" id="CHEBI:29101"/>
        <dbReference type="EC" id="7.2.4.2"/>
    </reaction>
</comment>
<comment type="cofactor">
    <cofactor evidence="1">
        <name>Na(+)</name>
        <dbReference type="ChEBI" id="CHEBI:29101"/>
    </cofactor>
</comment>
<comment type="subunit">
    <text evidence="1">Heterotrimer of an alpha, a beta and a gamma subunit.</text>
</comment>
<comment type="subcellular location">
    <subcellularLocation>
        <location evidence="1">Cell membrane</location>
        <topology evidence="1">Single-pass membrane protein</topology>
    </subcellularLocation>
</comment>
<comment type="similarity">
    <text evidence="1">Belongs to the OadG family.</text>
</comment>
<protein>
    <recommendedName>
        <fullName evidence="1">Probable oxaloacetate decarboxylase gamma chain</fullName>
        <ecNumber evidence="1">7.2.4.2</ecNumber>
    </recommendedName>
</protein>
<keyword id="KW-1003">Cell membrane</keyword>
<keyword id="KW-0406">Ion transport</keyword>
<keyword id="KW-0472">Membrane</keyword>
<keyword id="KW-0915">Sodium</keyword>
<keyword id="KW-0739">Sodium transport</keyword>
<keyword id="KW-1278">Translocase</keyword>
<keyword id="KW-0812">Transmembrane</keyword>
<keyword id="KW-1133">Transmembrane helix</keyword>
<keyword id="KW-0813">Transport</keyword>
<sequence length="85" mass="9280">MTNAELFGEGINLMISGMGFVLLFLIVLIYAISFISTLINKYFPEPIPAPVAKPVPSAVPTDNLDHLRPVIAAAIAHHRRQQGLK</sequence>
<proteinExistence type="inferred from homology"/>
<gene>
    <name evidence="1" type="primary">oadG</name>
    <name type="ordered locus">APP7_1426</name>
</gene>
<name>OADG_ACTP7</name>
<reference key="1">
    <citation type="submission" date="2008-06" db="EMBL/GenBank/DDBJ databases">
        <title>Genome and proteome analysis of A. pleuropneumoniae serotype 7.</title>
        <authorList>
            <person name="Linke B."/>
            <person name="Buettner F."/>
            <person name="Martinez-Arias R."/>
            <person name="Goesmann A."/>
            <person name="Baltes N."/>
            <person name="Tegetmeyer H."/>
            <person name="Singh M."/>
            <person name="Gerlach G.F."/>
        </authorList>
    </citation>
    <scope>NUCLEOTIDE SEQUENCE [LARGE SCALE GENOMIC DNA]</scope>
    <source>
        <strain>AP76</strain>
    </source>
</reference>
<evidence type="ECO:0000255" key="1">
    <source>
        <dbReference type="HAMAP-Rule" id="MF_00404"/>
    </source>
</evidence>
<accession>B3GYF4</accession>
<dbReference type="EC" id="7.2.4.2" evidence="1"/>
<dbReference type="EMBL" id="CP001091">
    <property type="protein sequence ID" value="ACE62078.1"/>
    <property type="molecule type" value="Genomic_DNA"/>
</dbReference>
<dbReference type="RefSeq" id="WP_005618986.1">
    <property type="nucleotide sequence ID" value="NC_010939.1"/>
</dbReference>
<dbReference type="SMR" id="B3GYF4"/>
<dbReference type="KEGG" id="apa:APP7_1426"/>
<dbReference type="HOGENOM" id="CLU_168750_3_2_6"/>
<dbReference type="Proteomes" id="UP000001226">
    <property type="component" value="Chromosome"/>
</dbReference>
<dbReference type="GO" id="GO:0005886">
    <property type="term" value="C:plasma membrane"/>
    <property type="evidence" value="ECO:0007669"/>
    <property type="project" value="UniProtKB-SubCell"/>
</dbReference>
<dbReference type="GO" id="GO:0015451">
    <property type="term" value="F:decarboxylation-driven active transmembrane transporter activity"/>
    <property type="evidence" value="ECO:0007669"/>
    <property type="project" value="UniProtKB-EC"/>
</dbReference>
<dbReference type="GO" id="GO:0008948">
    <property type="term" value="F:oxaloacetate decarboxylase activity"/>
    <property type="evidence" value="ECO:0007669"/>
    <property type="project" value="UniProtKB-UniRule"/>
</dbReference>
<dbReference type="GO" id="GO:0015081">
    <property type="term" value="F:sodium ion transmembrane transporter activity"/>
    <property type="evidence" value="ECO:0007669"/>
    <property type="project" value="UniProtKB-UniRule"/>
</dbReference>
<dbReference type="GO" id="GO:0036376">
    <property type="term" value="P:sodium ion export across plasma membrane"/>
    <property type="evidence" value="ECO:0007669"/>
    <property type="project" value="InterPro"/>
</dbReference>
<dbReference type="HAMAP" id="MF_00404">
    <property type="entry name" value="OadG"/>
    <property type="match status" value="1"/>
</dbReference>
<dbReference type="InterPro" id="IPR005899">
    <property type="entry name" value="Na_pump_deCOase"/>
</dbReference>
<dbReference type="InterPro" id="IPR023424">
    <property type="entry name" value="OadG"/>
</dbReference>
<dbReference type="NCBIfam" id="TIGR01195">
    <property type="entry name" value="oadG_fam"/>
    <property type="match status" value="1"/>
</dbReference>
<dbReference type="NCBIfam" id="NF002792">
    <property type="entry name" value="PRK02919.1"/>
    <property type="match status" value="1"/>
</dbReference>
<dbReference type="Pfam" id="PF04277">
    <property type="entry name" value="OAD_gamma"/>
    <property type="match status" value="1"/>
</dbReference>
<feature type="chain" id="PRO_1000123544" description="Probable oxaloacetate decarboxylase gamma chain">
    <location>
        <begin position="1"/>
        <end position="85"/>
    </location>
</feature>
<feature type="transmembrane region" description="Helical" evidence="1">
    <location>
        <begin position="15"/>
        <end position="35"/>
    </location>
</feature>
<organism>
    <name type="scientific">Actinobacillus pleuropneumoniae serotype 7 (strain AP76)</name>
    <dbReference type="NCBI Taxonomy" id="537457"/>
    <lineage>
        <taxon>Bacteria</taxon>
        <taxon>Pseudomonadati</taxon>
        <taxon>Pseudomonadota</taxon>
        <taxon>Gammaproteobacteria</taxon>
        <taxon>Pasteurellales</taxon>
        <taxon>Pasteurellaceae</taxon>
        <taxon>Actinobacillus</taxon>
    </lineage>
</organism>